<accession>P54641</accession>
<accession>Q557C4</accession>
<accession>Q86AH9</accession>
<name>VA0D_DICDI</name>
<reference key="1">
    <citation type="journal article" date="1994" name="J. Biol. Chem.">
        <title>Characterization of lysosomal membrane proteins of Dictyostelium discoideum. A complex population of acidic integral membrane glycoproteins, Rab GTP-binding proteins and vacuolar ATPase subunits.</title>
        <authorList>
            <person name="Temesvari L."/>
            <person name="Rodriguez-Paris J."/>
            <person name="Bush J."/>
            <person name="Steck T.L."/>
            <person name="Cardelli J."/>
        </authorList>
    </citation>
    <scope>NUCLEOTIDE SEQUENCE [MRNA]</scope>
    <source>
        <strain>AX3</strain>
    </source>
</reference>
<reference key="2">
    <citation type="journal article" date="2002" name="Nature">
        <title>Sequence and analysis of chromosome 2 of Dictyostelium discoideum.</title>
        <authorList>
            <person name="Gloeckner G."/>
            <person name="Eichinger L."/>
            <person name="Szafranski K."/>
            <person name="Pachebat J.A."/>
            <person name="Bankier A.T."/>
            <person name="Dear P.H."/>
            <person name="Lehmann R."/>
            <person name="Baumgart C."/>
            <person name="Parra G."/>
            <person name="Abril J.F."/>
            <person name="Guigo R."/>
            <person name="Kumpf K."/>
            <person name="Tunggal B."/>
            <person name="Cox E.C."/>
            <person name="Quail M.A."/>
            <person name="Platzer M."/>
            <person name="Rosenthal A."/>
            <person name="Noegel A.A."/>
        </authorList>
    </citation>
    <scope>NUCLEOTIDE SEQUENCE [LARGE SCALE GENOMIC DNA]</scope>
    <source>
        <strain>AX4</strain>
    </source>
</reference>
<reference key="3">
    <citation type="journal article" date="2005" name="Nature">
        <title>The genome of the social amoeba Dictyostelium discoideum.</title>
        <authorList>
            <person name="Eichinger L."/>
            <person name="Pachebat J.A."/>
            <person name="Gloeckner G."/>
            <person name="Rajandream M.A."/>
            <person name="Sucgang R."/>
            <person name="Berriman M."/>
            <person name="Song J."/>
            <person name="Olsen R."/>
            <person name="Szafranski K."/>
            <person name="Xu Q."/>
            <person name="Tunggal B."/>
            <person name="Kummerfeld S."/>
            <person name="Madera M."/>
            <person name="Konfortov B.A."/>
            <person name="Rivero F."/>
            <person name="Bankier A.T."/>
            <person name="Lehmann R."/>
            <person name="Hamlin N."/>
            <person name="Davies R."/>
            <person name="Gaudet P."/>
            <person name="Fey P."/>
            <person name="Pilcher K."/>
            <person name="Chen G."/>
            <person name="Saunders D."/>
            <person name="Sodergren E.J."/>
            <person name="Davis P."/>
            <person name="Kerhornou A."/>
            <person name="Nie X."/>
            <person name="Hall N."/>
            <person name="Anjard C."/>
            <person name="Hemphill L."/>
            <person name="Bason N."/>
            <person name="Farbrother P."/>
            <person name="Desany B."/>
            <person name="Just E."/>
            <person name="Morio T."/>
            <person name="Rost R."/>
            <person name="Churcher C.M."/>
            <person name="Cooper J."/>
            <person name="Haydock S."/>
            <person name="van Driessche N."/>
            <person name="Cronin A."/>
            <person name="Goodhead I."/>
            <person name="Muzny D.M."/>
            <person name="Mourier T."/>
            <person name="Pain A."/>
            <person name="Lu M."/>
            <person name="Harper D."/>
            <person name="Lindsay R."/>
            <person name="Hauser H."/>
            <person name="James K.D."/>
            <person name="Quiles M."/>
            <person name="Madan Babu M."/>
            <person name="Saito T."/>
            <person name="Buchrieser C."/>
            <person name="Wardroper A."/>
            <person name="Felder M."/>
            <person name="Thangavelu M."/>
            <person name="Johnson D."/>
            <person name="Knights A."/>
            <person name="Loulseged H."/>
            <person name="Mungall K.L."/>
            <person name="Oliver K."/>
            <person name="Price C."/>
            <person name="Quail M.A."/>
            <person name="Urushihara H."/>
            <person name="Hernandez J."/>
            <person name="Rabbinowitsch E."/>
            <person name="Steffen D."/>
            <person name="Sanders M."/>
            <person name="Ma J."/>
            <person name="Kohara Y."/>
            <person name="Sharp S."/>
            <person name="Simmonds M.N."/>
            <person name="Spiegler S."/>
            <person name="Tivey A."/>
            <person name="Sugano S."/>
            <person name="White B."/>
            <person name="Walker D."/>
            <person name="Woodward J.R."/>
            <person name="Winckler T."/>
            <person name="Tanaka Y."/>
            <person name="Shaulsky G."/>
            <person name="Schleicher M."/>
            <person name="Weinstock G.M."/>
            <person name="Rosenthal A."/>
            <person name="Cox E.C."/>
            <person name="Chisholm R.L."/>
            <person name="Gibbs R.A."/>
            <person name="Loomis W.F."/>
            <person name="Platzer M."/>
            <person name="Kay R.R."/>
            <person name="Williams J.G."/>
            <person name="Dear P.H."/>
            <person name="Noegel A.A."/>
            <person name="Barrell B.G."/>
            <person name="Kuspa A."/>
        </authorList>
    </citation>
    <scope>NUCLEOTIDE SEQUENCE [LARGE SCALE GENOMIC DNA]</scope>
    <source>
        <strain>AX4</strain>
    </source>
</reference>
<reference key="4">
    <citation type="journal article" date="2006" name="Mol. Cell. Proteomics">
        <title>Proteomics fingerprinting of phagosome maturation and evidence for the role of a Galpha during uptake.</title>
        <authorList>
            <person name="Gotthardt D."/>
            <person name="Blancheteau V."/>
            <person name="Bosserhoff A."/>
            <person name="Ruppert T."/>
            <person name="Delorenzi M."/>
            <person name="Soldati T."/>
        </authorList>
    </citation>
    <scope>IDENTIFICATION BY MASS SPECTROMETRY [LARGE SCALE ANALYSIS]</scope>
    <source>
        <strain>AX2</strain>
    </source>
</reference>
<sequence length="356" mass="40831">MGLFGGRKHGGLFTFNKDDGYLEAILRGFKKGILSRADYNNLCQCDNLEDMKMHFISTDYGDFLAGEPSPIHTTTIAEKATGKLVSEFNHIRNQAVEPLSTFMDFISYGYMIDNVVLLITGTLHERDISELVDKCHPLGLFKSMATLSVVHNVADLYNNVLIDTPLAPYIQGCLSEEDLDEMNIEIIRNTLYKAYLEDFYNYCKYLGGQTELIMSDILKFEADRRSINITINSFGATELSKDDREKLYPSLGLLYPEGTSKLGKAEDVDQVRGILEVYSTYRNFFSDGVNNEKSLEDSFFEHEVHLNRMAFEDQYGYGVFYAYIKLREQEIRNIVWIAECISQNMKQKMNQYIPIF</sequence>
<feature type="chain" id="PRO_0000119352" description="V-type proton ATPase subunit d">
    <location>
        <begin position="1"/>
        <end position="356"/>
    </location>
</feature>
<feature type="sequence conflict" description="In Ref. 1; AAA64993." evidence="1" ref="1">
    <original>I</original>
    <variation>N</variation>
    <location>
        <position position="184"/>
    </location>
</feature>
<evidence type="ECO:0000305" key="1"/>
<organism>
    <name type="scientific">Dictyostelium discoideum</name>
    <name type="common">Social amoeba</name>
    <dbReference type="NCBI Taxonomy" id="44689"/>
    <lineage>
        <taxon>Eukaryota</taxon>
        <taxon>Amoebozoa</taxon>
        <taxon>Evosea</taxon>
        <taxon>Eumycetozoa</taxon>
        <taxon>Dictyostelia</taxon>
        <taxon>Dictyosteliales</taxon>
        <taxon>Dictyosteliaceae</taxon>
        <taxon>Dictyostelium</taxon>
    </lineage>
</organism>
<comment type="function">
    <text>Subunit of the integral membrane V0 complex of vacuolar ATPase. Vacuolar ATPase is responsible for acidifying a variety of intracellular compartments in eukaryotic cells, thus providing most of the energy required for transport processes in the vacuolar system.</text>
</comment>
<comment type="subunit">
    <text>V-ATPase is a heteromultimeric enzyme composed of a peripheral catalytic V1 complex (components A to H) attached to an integral membrane V0 proton pore complex (components: a, c, c', c'' and d).</text>
</comment>
<comment type="similarity">
    <text evidence="1">Belongs to the V-ATPase V0D/AC39 subunit family.</text>
</comment>
<comment type="caution">
    <text evidence="1">The gene for this protein is duplicated in strains AX3 and AX4. These strains contain a duplication of a segment of 750 kb of chromosome 2 compared to the corresponding sequence in strain AX2.</text>
</comment>
<protein>
    <recommendedName>
        <fullName>V-type proton ATPase subunit d</fullName>
        <shortName>V-ATPase subunit d</shortName>
    </recommendedName>
    <alternativeName>
        <fullName>DVA41</fullName>
    </alternativeName>
    <alternativeName>
        <fullName>V-ATPase 41 kDa accessory protein</fullName>
    </alternativeName>
    <alternativeName>
        <fullName>Vacuolar proton pump subunit d</fullName>
    </alternativeName>
</protein>
<dbReference type="EMBL" id="U13150">
    <property type="protein sequence ID" value="AAA64993.1"/>
    <property type="molecule type" value="mRNA"/>
</dbReference>
<dbReference type="EMBL" id="AAFI02000011">
    <property type="protein sequence ID" value="EAL70519.1"/>
    <property type="molecule type" value="Genomic_DNA"/>
</dbReference>
<dbReference type="EMBL" id="AAFI02000009">
    <property type="protein sequence ID" value="EAL70753.1"/>
    <property type="molecule type" value="Genomic_DNA"/>
</dbReference>
<dbReference type="PIR" id="A55016">
    <property type="entry name" value="A55016"/>
</dbReference>
<dbReference type="RefSeq" id="XP_644445.1">
    <property type="nucleotide sequence ID" value="XM_639353.1"/>
</dbReference>
<dbReference type="RefSeq" id="XP_644805.1">
    <property type="nucleotide sequence ID" value="XM_639713.1"/>
</dbReference>
<dbReference type="SMR" id="P54641"/>
<dbReference type="FunCoup" id="P54641">
    <property type="interactions" value="894"/>
</dbReference>
<dbReference type="STRING" id="44689.P54641"/>
<dbReference type="PaxDb" id="44689-DDB0185227"/>
<dbReference type="EnsemblProtists" id="EAL70519">
    <property type="protein sequence ID" value="EAL70519"/>
    <property type="gene ID" value="DDB_G0273657"/>
</dbReference>
<dbReference type="EnsemblProtists" id="EAL70753">
    <property type="protein sequence ID" value="EAL70753"/>
    <property type="gene ID" value="DDB_G0273071"/>
</dbReference>
<dbReference type="GeneID" id="8618907"/>
<dbReference type="GeneID" id="8619070"/>
<dbReference type="KEGG" id="ddi:DDB_G0273071"/>
<dbReference type="KEGG" id="ddi:DDB_G0273657"/>
<dbReference type="dictyBase" id="DDB_G0273071">
    <property type="gene designation" value="vatD-1"/>
</dbReference>
<dbReference type="dictyBase" id="DDB_G0273657">
    <property type="gene designation" value="vatD-2"/>
</dbReference>
<dbReference type="VEuPathDB" id="AmoebaDB:DDB_G0273071"/>
<dbReference type="eggNOG" id="KOG2957">
    <property type="taxonomic scope" value="Eukaryota"/>
</dbReference>
<dbReference type="HOGENOM" id="CLU_051277_0_0_1"/>
<dbReference type="InParanoid" id="P54641"/>
<dbReference type="OMA" id="MTYGYMI"/>
<dbReference type="PhylomeDB" id="P54641"/>
<dbReference type="Reactome" id="R-DDI-1222556">
    <property type="pathway name" value="ROS and RNS production in phagocytes"/>
</dbReference>
<dbReference type="Reactome" id="R-DDI-77387">
    <property type="pathway name" value="Insulin receptor recycling"/>
</dbReference>
<dbReference type="Reactome" id="R-DDI-917977">
    <property type="pathway name" value="Transferrin endocytosis and recycling"/>
</dbReference>
<dbReference type="Reactome" id="R-DDI-9639288">
    <property type="pathway name" value="Amino acids regulate mTORC1"/>
</dbReference>
<dbReference type="PRO" id="PR:P54641"/>
<dbReference type="Proteomes" id="UP000002195">
    <property type="component" value="Chromosome 2"/>
</dbReference>
<dbReference type="GO" id="GO:0031164">
    <property type="term" value="C:contractile vacuolar membrane"/>
    <property type="evidence" value="ECO:0000304"/>
    <property type="project" value="dictyBase"/>
</dbReference>
<dbReference type="GO" id="GO:0032009">
    <property type="term" value="C:early phagosome"/>
    <property type="evidence" value="ECO:0000314"/>
    <property type="project" value="dictyBase"/>
</dbReference>
<dbReference type="GO" id="GO:0030139">
    <property type="term" value="C:endocytic vesicle"/>
    <property type="evidence" value="ECO:0000314"/>
    <property type="project" value="dictyBase"/>
</dbReference>
<dbReference type="GO" id="GO:0005765">
    <property type="term" value="C:lysosomal membrane"/>
    <property type="evidence" value="ECO:0000314"/>
    <property type="project" value="dictyBase"/>
</dbReference>
<dbReference type="GO" id="GO:0045335">
    <property type="term" value="C:phagocytic vesicle"/>
    <property type="evidence" value="ECO:0007005"/>
    <property type="project" value="dictyBase"/>
</dbReference>
<dbReference type="GO" id="GO:0033179">
    <property type="term" value="C:proton-transporting V-type ATPase, V0 domain"/>
    <property type="evidence" value="ECO:0007669"/>
    <property type="project" value="InterPro"/>
</dbReference>
<dbReference type="GO" id="GO:0016471">
    <property type="term" value="C:vacuolar proton-transporting V-type ATPase complex"/>
    <property type="evidence" value="ECO:0000318"/>
    <property type="project" value="GO_Central"/>
</dbReference>
<dbReference type="GO" id="GO:0046961">
    <property type="term" value="F:proton-transporting ATPase activity, rotational mechanism"/>
    <property type="evidence" value="ECO:0007669"/>
    <property type="project" value="InterPro"/>
</dbReference>
<dbReference type="GO" id="GO:0007035">
    <property type="term" value="P:vacuolar acidification"/>
    <property type="evidence" value="ECO:0000318"/>
    <property type="project" value="GO_Central"/>
</dbReference>
<dbReference type="GO" id="GO:0007034">
    <property type="term" value="P:vacuolar transport"/>
    <property type="evidence" value="ECO:0000318"/>
    <property type="project" value="GO_Central"/>
</dbReference>
<dbReference type="FunFam" id="1.10.132.50:FF:000002">
    <property type="entry name" value="V-type proton ATPase subunit"/>
    <property type="match status" value="1"/>
</dbReference>
<dbReference type="FunFam" id="1.20.1690.10:FF:000001">
    <property type="entry name" value="V-type proton ATPase subunit"/>
    <property type="match status" value="1"/>
</dbReference>
<dbReference type="FunFam" id="1.20.1690.10:FF:000003">
    <property type="entry name" value="V-type proton ATPase subunit"/>
    <property type="match status" value="1"/>
</dbReference>
<dbReference type="Gene3D" id="1.10.132.50">
    <property type="entry name" value="ATP synthase (C/AC39) subunit, domain 3"/>
    <property type="match status" value="1"/>
</dbReference>
<dbReference type="Gene3D" id="1.20.1690.10">
    <property type="entry name" value="V-type ATP synthase subunit C domain"/>
    <property type="match status" value="2"/>
</dbReference>
<dbReference type="InterPro" id="IPR036079">
    <property type="entry name" value="ATPase_csu/dsu_sf"/>
</dbReference>
<dbReference type="InterPro" id="IPR002843">
    <property type="entry name" value="ATPase_V0-cplx_csu/dsu"/>
</dbReference>
<dbReference type="InterPro" id="IPR016727">
    <property type="entry name" value="ATPase_V0-cplx_dsu"/>
</dbReference>
<dbReference type="InterPro" id="IPR035067">
    <property type="entry name" value="V-type_ATPase_csu/dsu"/>
</dbReference>
<dbReference type="InterPro" id="IPR044911">
    <property type="entry name" value="V-type_ATPase_csu/dsu_dom_3"/>
</dbReference>
<dbReference type="PANTHER" id="PTHR11028">
    <property type="entry name" value="VACUOLAR ATP SYNTHASE SUBUNIT AC39"/>
    <property type="match status" value="1"/>
</dbReference>
<dbReference type="Pfam" id="PF01992">
    <property type="entry name" value="vATP-synt_AC39"/>
    <property type="match status" value="1"/>
</dbReference>
<dbReference type="PIRSF" id="PIRSF018497">
    <property type="entry name" value="V-ATP_synth_D"/>
    <property type="match status" value="1"/>
</dbReference>
<dbReference type="SUPFAM" id="SSF103486">
    <property type="entry name" value="V-type ATP synthase subunit C"/>
    <property type="match status" value="1"/>
</dbReference>
<proteinExistence type="evidence at protein level"/>
<gene>
    <name type="primary">vatD-1</name>
    <name type="ORF">DDB_G0273071</name>
</gene>
<gene>
    <name type="primary">vatD-2</name>
    <name type="ORF">DDB_G0273657</name>
</gene>
<keyword id="KW-0375">Hydrogen ion transport</keyword>
<keyword id="KW-0406">Ion transport</keyword>
<keyword id="KW-1185">Reference proteome</keyword>
<keyword id="KW-0813">Transport</keyword>